<comment type="function">
    <text evidence="1">Transcription factor required for normal development of thymus, parathyroid glands, ultimobranchial bodies, teeth, skeletal elements of skull and larynx as well as distal limbs.</text>
</comment>
<comment type="subunit">
    <text evidence="1">Interacts with KDM5B.</text>
</comment>
<comment type="subcellular location">
    <subcellularLocation>
        <location>Nucleus</location>
    </subcellularLocation>
</comment>
<organism>
    <name type="scientific">Pan troglodytes</name>
    <name type="common">Chimpanzee</name>
    <dbReference type="NCBI Taxonomy" id="9598"/>
    <lineage>
        <taxon>Eukaryota</taxon>
        <taxon>Metazoa</taxon>
        <taxon>Chordata</taxon>
        <taxon>Craniata</taxon>
        <taxon>Vertebrata</taxon>
        <taxon>Euteleostomi</taxon>
        <taxon>Mammalia</taxon>
        <taxon>Eutheria</taxon>
        <taxon>Euarchontoglires</taxon>
        <taxon>Primates</taxon>
        <taxon>Haplorrhini</taxon>
        <taxon>Catarrhini</taxon>
        <taxon>Hominidae</taxon>
        <taxon>Pan</taxon>
    </lineage>
</organism>
<dbReference type="EMBL" id="DQ067507">
    <property type="protein sequence ID" value="AAZ39854.1"/>
    <property type="molecule type" value="Genomic_DNA"/>
</dbReference>
<dbReference type="EMBL" id="DQ067505">
    <property type="protein sequence ID" value="AAZ39854.1"/>
    <property type="status" value="JOINED"/>
    <property type="molecule type" value="Genomic_DNA"/>
</dbReference>
<dbReference type="EMBL" id="DQ067506">
    <property type="protein sequence ID" value="AAZ39854.1"/>
    <property type="status" value="JOINED"/>
    <property type="molecule type" value="Genomic_DNA"/>
</dbReference>
<dbReference type="RefSeq" id="XP_016781499.1">
    <property type="nucleotide sequence ID" value="XM_016926010.1"/>
</dbReference>
<dbReference type="RefSeq" id="XP_016781500.1">
    <property type="nucleotide sequence ID" value="XM_016926011.1"/>
</dbReference>
<dbReference type="RefSeq" id="XP_054521927.1">
    <property type="nucleotide sequence ID" value="XM_054665952.2"/>
</dbReference>
<dbReference type="SMR" id="Q2VL62"/>
<dbReference type="FunCoup" id="Q2VL62">
    <property type="interactions" value="1639"/>
</dbReference>
<dbReference type="STRING" id="9598.ENSPTRP00000010655"/>
<dbReference type="PaxDb" id="9598-ENSPTRP00000010655"/>
<dbReference type="Ensembl" id="ENSPTRT00000077320.1">
    <property type="protein sequence ID" value="ENSPTRP00000065976.1"/>
    <property type="gene ID" value="ENSPTRG00000006281.7"/>
</dbReference>
<dbReference type="GeneID" id="737458"/>
<dbReference type="VGNC" id="VGNC:57256">
    <property type="gene designation" value="PAX9"/>
</dbReference>
<dbReference type="eggNOG" id="KOG3517">
    <property type="taxonomic scope" value="Eukaryota"/>
</dbReference>
<dbReference type="GeneTree" id="ENSGT00940000159896"/>
<dbReference type="InParanoid" id="Q2VL62"/>
<dbReference type="OMA" id="STMAPYP"/>
<dbReference type="OrthoDB" id="11039at9604"/>
<dbReference type="Proteomes" id="UP000002277">
    <property type="component" value="Chromosome 14"/>
</dbReference>
<dbReference type="Bgee" id="ENSPTRG00000006281">
    <property type="expression patterns" value="Expressed in thymus and 2 other cell types or tissues"/>
</dbReference>
<dbReference type="GO" id="GO:0005634">
    <property type="term" value="C:nucleus"/>
    <property type="evidence" value="ECO:0007669"/>
    <property type="project" value="UniProtKB-SubCell"/>
</dbReference>
<dbReference type="GO" id="GO:0000981">
    <property type="term" value="F:DNA-binding transcription factor activity, RNA polymerase II-specific"/>
    <property type="evidence" value="ECO:0000318"/>
    <property type="project" value="GO_Central"/>
</dbReference>
<dbReference type="GO" id="GO:0000978">
    <property type="term" value="F:RNA polymerase II cis-regulatory region sequence-specific DNA binding"/>
    <property type="evidence" value="ECO:0000318"/>
    <property type="project" value="GO_Central"/>
</dbReference>
<dbReference type="GO" id="GO:0006357">
    <property type="term" value="P:regulation of transcription by RNA polymerase II"/>
    <property type="evidence" value="ECO:0000318"/>
    <property type="project" value="GO_Central"/>
</dbReference>
<dbReference type="CDD" id="cd00131">
    <property type="entry name" value="PAX"/>
    <property type="match status" value="1"/>
</dbReference>
<dbReference type="FunFam" id="1.10.10.10:FF:000003">
    <property type="entry name" value="Paired box protein Pax-6"/>
    <property type="match status" value="1"/>
</dbReference>
<dbReference type="FunFam" id="1.10.10.10:FF:000084">
    <property type="entry name" value="paired box protein Pax-9"/>
    <property type="match status" value="1"/>
</dbReference>
<dbReference type="Gene3D" id="1.10.10.10">
    <property type="entry name" value="Winged helix-like DNA-binding domain superfamily/Winged helix DNA-binding domain"/>
    <property type="match status" value="2"/>
</dbReference>
<dbReference type="InterPro" id="IPR009057">
    <property type="entry name" value="Homeodomain-like_sf"/>
</dbReference>
<dbReference type="InterPro" id="IPR043182">
    <property type="entry name" value="PAIRED_DNA-bd_dom"/>
</dbReference>
<dbReference type="InterPro" id="IPR001523">
    <property type="entry name" value="Paired_dom"/>
</dbReference>
<dbReference type="InterPro" id="IPR043565">
    <property type="entry name" value="PAX_fam"/>
</dbReference>
<dbReference type="InterPro" id="IPR036388">
    <property type="entry name" value="WH-like_DNA-bd_sf"/>
</dbReference>
<dbReference type="PANTHER" id="PTHR45636">
    <property type="entry name" value="PAIRED BOX PROTEIN PAX-6-RELATED-RELATED"/>
    <property type="match status" value="1"/>
</dbReference>
<dbReference type="PANTHER" id="PTHR45636:SF13">
    <property type="entry name" value="PAIRED BOX PROTEIN PAX-9"/>
    <property type="match status" value="1"/>
</dbReference>
<dbReference type="Pfam" id="PF00292">
    <property type="entry name" value="PAX"/>
    <property type="match status" value="1"/>
</dbReference>
<dbReference type="PRINTS" id="PR00027">
    <property type="entry name" value="PAIREDBOX"/>
</dbReference>
<dbReference type="SMART" id="SM00351">
    <property type="entry name" value="PAX"/>
    <property type="match status" value="1"/>
</dbReference>
<dbReference type="SUPFAM" id="SSF46689">
    <property type="entry name" value="Homeodomain-like"/>
    <property type="match status" value="1"/>
</dbReference>
<dbReference type="PROSITE" id="PS00034">
    <property type="entry name" value="PAIRED_1"/>
    <property type="match status" value="1"/>
</dbReference>
<dbReference type="PROSITE" id="PS51057">
    <property type="entry name" value="PAIRED_2"/>
    <property type="match status" value="1"/>
</dbReference>
<reference key="1">
    <citation type="journal article" date="2006" name="Mol. Biol. Evol.">
        <title>Molecular evolution of the primate developmental genes MSX1 and PAX9.</title>
        <authorList>
            <person name="Perry G.H."/>
            <person name="Verrelli B.C."/>
            <person name="Stone A.C."/>
        </authorList>
    </citation>
    <scope>NUCLEOTIDE SEQUENCE [GENOMIC DNA]</scope>
    <source>
        <strain>Isolate ISIS 2417</strain>
    </source>
</reference>
<accession>Q2VL62</accession>
<keyword id="KW-0217">Developmental protein</keyword>
<keyword id="KW-0238">DNA-binding</keyword>
<keyword id="KW-0539">Nucleus</keyword>
<keyword id="KW-0563">Paired box</keyword>
<keyword id="KW-1185">Reference proteome</keyword>
<keyword id="KW-0804">Transcription</keyword>
<keyword id="KW-0805">Transcription regulation</keyword>
<feature type="chain" id="PRO_0000050209" description="Paired box protein Pax-9">
    <location>
        <begin position="1"/>
        <end position="341"/>
    </location>
</feature>
<feature type="DNA-binding region" description="Paired" evidence="2">
    <location>
        <begin position="4"/>
        <end position="130"/>
    </location>
</feature>
<feature type="region of interest" description="PAI subdomain" evidence="2">
    <location>
        <begin position="7"/>
        <end position="63"/>
    </location>
</feature>
<feature type="region of interest" description="RED subdomain" evidence="2">
    <location>
        <begin position="82"/>
        <end position="130"/>
    </location>
</feature>
<feature type="region of interest" description="Interaction with KDM5B" evidence="1">
    <location>
        <begin position="168"/>
        <end position="189"/>
    </location>
</feature>
<gene>
    <name type="primary">PAX9</name>
</gene>
<proteinExistence type="inferred from homology"/>
<sequence>MEPAFGEVNQLGGVFVNGRPLPNAIRLRIVELAQLGIRPCDISRQLRVSHGCVSKILARYNETGSILPGAIGGSKPRVTTPTVVKHIRTYKQRDPGIFAWEIRDRLLADGVCDKYNVPSVSSISRILRNKIGNLAQQGHYDSYKQHQPTPQPALPYNHIYSYPSPITAAAAKVPTPPGVPAIPGSVAMPRTWPSSHSVTDILGIRSITDQVSDSSPYHSPKVEEWSSLGRNNFPAAAPHAVNGLEKGALEQEAKYGQAPNGLPAVGSFVSASSMAPYPTPAQVSPYMTYSAAPSGYVAGHGWQHAGGTSLSPHNCDIPASLAFKGMQAAREGSHSVTASVL</sequence>
<name>PAX9_PANTR</name>
<evidence type="ECO:0000250" key="1"/>
<evidence type="ECO:0000255" key="2">
    <source>
        <dbReference type="PROSITE-ProRule" id="PRU00381"/>
    </source>
</evidence>
<protein>
    <recommendedName>
        <fullName>Paired box protein Pax-9</fullName>
    </recommendedName>
</protein>